<gene>
    <name evidence="1" type="primary">zapA</name>
    <name type="ordered locus">SEN2903</name>
</gene>
<sequence length="109" mass="12523">MSAQPVDIQIFGRSLRVNCPPDQRDALNQAADDLNQRLQDLKVRTRVTNTEQLVFIAALNISYELTQEKAKTRDYAASMEQRIRMLQQTIEQALLDQGRITEKTGQNFE</sequence>
<protein>
    <recommendedName>
        <fullName evidence="1">Cell division protein ZapA</fullName>
    </recommendedName>
    <alternativeName>
        <fullName evidence="1">Z ring-associated protein ZapA</fullName>
    </alternativeName>
</protein>
<proteinExistence type="inferred from homology"/>
<organism>
    <name type="scientific">Salmonella enteritidis PT4 (strain P125109)</name>
    <dbReference type="NCBI Taxonomy" id="550537"/>
    <lineage>
        <taxon>Bacteria</taxon>
        <taxon>Pseudomonadati</taxon>
        <taxon>Pseudomonadota</taxon>
        <taxon>Gammaproteobacteria</taxon>
        <taxon>Enterobacterales</taxon>
        <taxon>Enterobacteriaceae</taxon>
        <taxon>Salmonella</taxon>
    </lineage>
</organism>
<reference key="1">
    <citation type="journal article" date="2008" name="Genome Res.">
        <title>Comparative genome analysis of Salmonella enteritidis PT4 and Salmonella gallinarum 287/91 provides insights into evolutionary and host adaptation pathways.</title>
        <authorList>
            <person name="Thomson N.R."/>
            <person name="Clayton D.J."/>
            <person name="Windhorst D."/>
            <person name="Vernikos G."/>
            <person name="Davidson S."/>
            <person name="Churcher C."/>
            <person name="Quail M.A."/>
            <person name="Stevens M."/>
            <person name="Jones M.A."/>
            <person name="Watson M."/>
            <person name="Barron A."/>
            <person name="Layton A."/>
            <person name="Pickard D."/>
            <person name="Kingsley R.A."/>
            <person name="Bignell A."/>
            <person name="Clark L."/>
            <person name="Harris B."/>
            <person name="Ormond D."/>
            <person name="Abdellah Z."/>
            <person name="Brooks K."/>
            <person name="Cherevach I."/>
            <person name="Chillingworth T."/>
            <person name="Woodward J."/>
            <person name="Norberczak H."/>
            <person name="Lord A."/>
            <person name="Arrowsmith C."/>
            <person name="Jagels K."/>
            <person name="Moule S."/>
            <person name="Mungall K."/>
            <person name="Saunders M."/>
            <person name="Whitehead S."/>
            <person name="Chabalgoity J.A."/>
            <person name="Maskell D."/>
            <person name="Humphreys T."/>
            <person name="Roberts M."/>
            <person name="Barrow P.A."/>
            <person name="Dougan G."/>
            <person name="Parkhill J."/>
        </authorList>
    </citation>
    <scope>NUCLEOTIDE SEQUENCE [LARGE SCALE GENOMIC DNA]</scope>
    <source>
        <strain>P125109</strain>
    </source>
</reference>
<name>ZAPA_SALEP</name>
<comment type="function">
    <text evidence="1">Activator of cell division through the inhibition of FtsZ GTPase activity, therefore promoting FtsZ assembly into bundles of protofilaments necessary for the formation of the division Z ring. It is recruited early at mid-cell but it is not essential for cell division.</text>
</comment>
<comment type="subunit">
    <text evidence="1">Homodimer. Interacts with FtsZ.</text>
</comment>
<comment type="subcellular location">
    <subcellularLocation>
        <location evidence="1">Cytoplasm</location>
    </subcellularLocation>
    <text evidence="1">Localizes at mid-cell.</text>
</comment>
<comment type="similarity">
    <text evidence="1">Belongs to the ZapA family. Type 1 subfamily.</text>
</comment>
<feature type="chain" id="PRO_1000189519" description="Cell division protein ZapA">
    <location>
        <begin position="1"/>
        <end position="109"/>
    </location>
</feature>
<feature type="coiled-coil region" evidence="1">
    <location>
        <begin position="21"/>
        <end position="97"/>
    </location>
</feature>
<keyword id="KW-0131">Cell cycle</keyword>
<keyword id="KW-0132">Cell division</keyword>
<keyword id="KW-0175">Coiled coil</keyword>
<keyword id="KW-0963">Cytoplasm</keyword>
<keyword id="KW-0717">Septation</keyword>
<evidence type="ECO:0000255" key="1">
    <source>
        <dbReference type="HAMAP-Rule" id="MF_02012"/>
    </source>
</evidence>
<accession>B5QXI7</accession>
<dbReference type="EMBL" id="AM933172">
    <property type="protein sequence ID" value="CAR34481.1"/>
    <property type="molecule type" value="Genomic_DNA"/>
</dbReference>
<dbReference type="RefSeq" id="WP_001276011.1">
    <property type="nucleotide sequence ID" value="NC_011294.1"/>
</dbReference>
<dbReference type="SMR" id="B5QXI7"/>
<dbReference type="GeneID" id="66757358"/>
<dbReference type="KEGG" id="set:SEN2903"/>
<dbReference type="HOGENOM" id="CLU_116623_3_0_6"/>
<dbReference type="Proteomes" id="UP000000613">
    <property type="component" value="Chromosome"/>
</dbReference>
<dbReference type="GO" id="GO:0032153">
    <property type="term" value="C:cell division site"/>
    <property type="evidence" value="ECO:0007669"/>
    <property type="project" value="TreeGrafter"/>
</dbReference>
<dbReference type="GO" id="GO:0030428">
    <property type="term" value="C:cell septum"/>
    <property type="evidence" value="ECO:0007669"/>
    <property type="project" value="TreeGrafter"/>
</dbReference>
<dbReference type="GO" id="GO:0005829">
    <property type="term" value="C:cytosol"/>
    <property type="evidence" value="ECO:0007669"/>
    <property type="project" value="TreeGrafter"/>
</dbReference>
<dbReference type="GO" id="GO:0005886">
    <property type="term" value="C:plasma membrane"/>
    <property type="evidence" value="ECO:0007669"/>
    <property type="project" value="UniProtKB-UniRule"/>
</dbReference>
<dbReference type="GO" id="GO:0000917">
    <property type="term" value="P:division septum assembly"/>
    <property type="evidence" value="ECO:0007669"/>
    <property type="project" value="UniProtKB-KW"/>
</dbReference>
<dbReference type="GO" id="GO:0043093">
    <property type="term" value="P:FtsZ-dependent cytokinesis"/>
    <property type="evidence" value="ECO:0007669"/>
    <property type="project" value="TreeGrafter"/>
</dbReference>
<dbReference type="GO" id="GO:0000921">
    <property type="term" value="P:septin ring assembly"/>
    <property type="evidence" value="ECO:0007669"/>
    <property type="project" value="TreeGrafter"/>
</dbReference>
<dbReference type="FunFam" id="1.20.5.50:FF:000001">
    <property type="entry name" value="Cell division protein ZapA"/>
    <property type="match status" value="1"/>
</dbReference>
<dbReference type="FunFam" id="3.30.160.880:FF:000001">
    <property type="entry name" value="Cell division protein ZapA"/>
    <property type="match status" value="1"/>
</dbReference>
<dbReference type="Gene3D" id="1.20.5.50">
    <property type="match status" value="1"/>
</dbReference>
<dbReference type="Gene3D" id="3.30.160.880">
    <property type="entry name" value="Cell division protein ZapA protomer, N-terminal domain"/>
    <property type="match status" value="1"/>
</dbReference>
<dbReference type="HAMAP" id="MF_02012">
    <property type="entry name" value="ZapA_type1"/>
    <property type="match status" value="1"/>
</dbReference>
<dbReference type="InterPro" id="IPR007838">
    <property type="entry name" value="Cell_div_ZapA-like"/>
</dbReference>
<dbReference type="InterPro" id="IPR036192">
    <property type="entry name" value="Cell_div_ZapA-like_sf"/>
</dbReference>
<dbReference type="InterPro" id="IPR023771">
    <property type="entry name" value="Cell_div_ZapA_eubact"/>
</dbReference>
<dbReference type="InterPro" id="IPR042233">
    <property type="entry name" value="Cell_div_ZapA_N"/>
</dbReference>
<dbReference type="NCBIfam" id="NF008209">
    <property type="entry name" value="PRK10972.1"/>
    <property type="match status" value="1"/>
</dbReference>
<dbReference type="PANTHER" id="PTHR34981">
    <property type="entry name" value="CELL DIVISION PROTEIN ZAPA"/>
    <property type="match status" value="1"/>
</dbReference>
<dbReference type="PANTHER" id="PTHR34981:SF1">
    <property type="entry name" value="CELL DIVISION PROTEIN ZAPA"/>
    <property type="match status" value="1"/>
</dbReference>
<dbReference type="Pfam" id="PF05164">
    <property type="entry name" value="ZapA"/>
    <property type="match status" value="1"/>
</dbReference>
<dbReference type="SUPFAM" id="SSF102829">
    <property type="entry name" value="Cell division protein ZapA-like"/>
    <property type="match status" value="1"/>
</dbReference>